<protein>
    <recommendedName>
        <fullName>Protein Wnt-6</fullName>
    </recommendedName>
</protein>
<feature type="signal peptide" evidence="4">
    <location>
        <begin position="1"/>
        <end position="23"/>
    </location>
</feature>
<feature type="chain" id="PRO_0000041441" description="Protein Wnt-6">
    <location>
        <begin position="24"/>
        <end position="364"/>
    </location>
</feature>
<feature type="region of interest" description="Disordered" evidence="5">
    <location>
        <begin position="140"/>
        <end position="162"/>
    </location>
</feature>
<feature type="lipid moiety-binding region" description="O-palmitoleoyl serine; by PORCN" evidence="3">
    <location>
        <position position="227"/>
    </location>
</feature>
<feature type="glycosylation site" description="N-linked (GlcNAc...) asparagine" evidence="4">
    <location>
        <position position="85"/>
    </location>
</feature>
<feature type="glycosylation site" description="N-linked (GlcNAc...) asparagine" evidence="4">
    <location>
        <position position="310"/>
    </location>
</feature>
<feature type="disulfide bond" evidence="2">
    <location>
        <begin position="75"/>
        <end position="86"/>
    </location>
</feature>
<feature type="disulfide bond" evidence="2">
    <location>
        <begin position="123"/>
        <end position="131"/>
    </location>
</feature>
<feature type="disulfide bond" evidence="2">
    <location>
        <begin position="133"/>
        <end position="171"/>
    </location>
</feature>
<feature type="disulfide bond" evidence="2">
    <location>
        <begin position="221"/>
        <end position="235"/>
    </location>
</feature>
<feature type="disulfide bond" evidence="2">
    <location>
        <begin position="223"/>
        <end position="230"/>
    </location>
</feature>
<feature type="disulfide bond" evidence="2">
    <location>
        <begin position="293"/>
        <end position="324"/>
    </location>
</feature>
<feature type="disulfide bond" evidence="2">
    <location>
        <begin position="309"/>
        <end position="319"/>
    </location>
</feature>
<feature type="disulfide bond" evidence="2">
    <location>
        <begin position="323"/>
        <end position="363"/>
    </location>
</feature>
<feature type="disulfide bond" evidence="2">
    <location>
        <begin position="339"/>
        <end position="354"/>
    </location>
</feature>
<feature type="disulfide bond" evidence="2">
    <location>
        <begin position="341"/>
        <end position="351"/>
    </location>
</feature>
<feature type="disulfide bond" evidence="2">
    <location>
        <begin position="346"/>
        <end position="347"/>
    </location>
</feature>
<feature type="sequence conflict" description="In Ref. 1; AAA40569." evidence="8" ref="1">
    <original>R</original>
    <variation>S</variation>
    <location>
        <position position="233"/>
    </location>
</feature>
<sequence length="364" mass="39656">MLPPVPSRLGLLLLLLCPAHVDGLWWAVGSPLVMDPTSICRKARRLAGRQAELCQAEPEVVAELARGARLGVRECQFQFRFRRWNCSSHSKAFGRVLQQDIRETAFVFAITAAGASHAVTQACSMGELLQCGCQAPRGRAPPRPSGLLGTPGPPGPTGSPDASAAWEWGGCGDDVDFGDEKSRLFMDAQHKRGRGDIRALVQLHNNEAGRLAVRSHTRTECKCHGLSGSCALRTCWQKLPPFREVGARLLERFHGASRVMGTNDGKALLPAVRTLKPPGRADLLYAADSPDFCAPNRRTGSPGTRGRACNSSAPDLSGCDLLCCGRGHRQESVQLEENCLCRFHWCCVVQCHRCRVRKELSLCL</sequence>
<dbReference type="EMBL" id="M89800">
    <property type="protein sequence ID" value="AAA40569.1"/>
    <property type="molecule type" value="mRNA"/>
</dbReference>
<dbReference type="EMBL" id="AK133954">
    <property type="protein sequence ID" value="BAE21949.1"/>
    <property type="molecule type" value="mRNA"/>
</dbReference>
<dbReference type="EMBL" id="CH466548">
    <property type="protein sequence ID" value="EDL00351.1"/>
    <property type="molecule type" value="Genomic_DNA"/>
</dbReference>
<dbReference type="EMBL" id="BC048700">
    <property type="protein sequence ID" value="AAH48700.1"/>
    <property type="molecule type" value="mRNA"/>
</dbReference>
<dbReference type="CCDS" id="CCDS15056.1"/>
<dbReference type="PIR" id="F36470">
    <property type="entry name" value="F36470"/>
</dbReference>
<dbReference type="RefSeq" id="NP_033552.2">
    <property type="nucleotide sequence ID" value="NM_009526.3"/>
</dbReference>
<dbReference type="RefSeq" id="XP_006495950.1">
    <property type="nucleotide sequence ID" value="XM_006495887.4"/>
</dbReference>
<dbReference type="RefSeq" id="XP_006495951.1">
    <property type="nucleotide sequence ID" value="XM_006495888.4"/>
</dbReference>
<dbReference type="SMR" id="P22727"/>
<dbReference type="BioGRID" id="204579">
    <property type="interactions" value="1"/>
</dbReference>
<dbReference type="FunCoup" id="P22727">
    <property type="interactions" value="405"/>
</dbReference>
<dbReference type="IntAct" id="P22727">
    <property type="interactions" value="1"/>
</dbReference>
<dbReference type="STRING" id="10090.ENSMUSP00000006716"/>
<dbReference type="GlyCosmos" id="P22727">
    <property type="glycosylation" value="2 sites, No reported glycans"/>
</dbReference>
<dbReference type="GlyGen" id="P22727">
    <property type="glycosylation" value="3 sites, 1 N-linked glycan (1 site)"/>
</dbReference>
<dbReference type="PhosphoSitePlus" id="P22727"/>
<dbReference type="SwissPalm" id="P22727"/>
<dbReference type="PaxDb" id="10090-ENSMUSP00000006716"/>
<dbReference type="ProteomicsDB" id="299774"/>
<dbReference type="Antibodypedia" id="34291">
    <property type="antibodies" value="242 antibodies from 34 providers"/>
</dbReference>
<dbReference type="DNASU" id="22420"/>
<dbReference type="Ensembl" id="ENSMUST00000006716.8">
    <property type="protein sequence ID" value="ENSMUSP00000006716.7"/>
    <property type="gene ID" value="ENSMUSG00000033227.8"/>
</dbReference>
<dbReference type="GeneID" id="22420"/>
<dbReference type="KEGG" id="mmu:22420"/>
<dbReference type="UCSC" id="uc007bne.1">
    <property type="organism name" value="mouse"/>
</dbReference>
<dbReference type="AGR" id="MGI:98960"/>
<dbReference type="CTD" id="7475"/>
<dbReference type="MGI" id="MGI:98960">
    <property type="gene designation" value="Wnt6"/>
</dbReference>
<dbReference type="VEuPathDB" id="HostDB:ENSMUSG00000033227"/>
<dbReference type="eggNOG" id="KOG3913">
    <property type="taxonomic scope" value="Eukaryota"/>
</dbReference>
<dbReference type="GeneTree" id="ENSGT00940000159281"/>
<dbReference type="HOGENOM" id="CLU_033039_1_3_1"/>
<dbReference type="InParanoid" id="P22727"/>
<dbReference type="OMA" id="EWTNCNC"/>
<dbReference type="OrthoDB" id="5945655at2759"/>
<dbReference type="PhylomeDB" id="P22727"/>
<dbReference type="TreeFam" id="TF105310"/>
<dbReference type="Reactome" id="R-MMU-3238698">
    <property type="pathway name" value="WNT ligand biogenesis and trafficking"/>
</dbReference>
<dbReference type="BioGRID-ORCS" id="22420">
    <property type="hits" value="2 hits in 80 CRISPR screens"/>
</dbReference>
<dbReference type="PRO" id="PR:P22727"/>
<dbReference type="Proteomes" id="UP000000589">
    <property type="component" value="Chromosome 1"/>
</dbReference>
<dbReference type="RNAct" id="P22727">
    <property type="molecule type" value="protein"/>
</dbReference>
<dbReference type="Bgee" id="ENSMUSG00000033227">
    <property type="expression patterns" value="Expressed in lumbar dorsal root ganglion and 190 other cell types or tissues"/>
</dbReference>
<dbReference type="GO" id="GO:0009986">
    <property type="term" value="C:cell surface"/>
    <property type="evidence" value="ECO:0000314"/>
    <property type="project" value="BHF-UCL"/>
</dbReference>
<dbReference type="GO" id="GO:0005788">
    <property type="term" value="C:endoplasmic reticulum lumen"/>
    <property type="evidence" value="ECO:0000304"/>
    <property type="project" value="Reactome"/>
</dbReference>
<dbReference type="GO" id="GO:0031012">
    <property type="term" value="C:extracellular matrix"/>
    <property type="evidence" value="ECO:0000314"/>
    <property type="project" value="MGI"/>
</dbReference>
<dbReference type="GO" id="GO:0005576">
    <property type="term" value="C:extracellular region"/>
    <property type="evidence" value="ECO:0007669"/>
    <property type="project" value="UniProtKB-KW"/>
</dbReference>
<dbReference type="GO" id="GO:0005102">
    <property type="term" value="F:signaling receptor binding"/>
    <property type="evidence" value="ECO:0000304"/>
    <property type="project" value="MGI"/>
</dbReference>
<dbReference type="GO" id="GO:0009887">
    <property type="term" value="P:animal organ morphogenesis"/>
    <property type="evidence" value="ECO:0000304"/>
    <property type="project" value="MGI"/>
</dbReference>
<dbReference type="GO" id="GO:0009798">
    <property type="term" value="P:axis specification"/>
    <property type="evidence" value="ECO:0000314"/>
    <property type="project" value="MGI"/>
</dbReference>
<dbReference type="GO" id="GO:0001658">
    <property type="term" value="P:branching involved in ureteric bud morphogenesis"/>
    <property type="evidence" value="ECO:0000316"/>
    <property type="project" value="MGI"/>
</dbReference>
<dbReference type="GO" id="GO:0007267">
    <property type="term" value="P:cell-cell signaling"/>
    <property type="evidence" value="ECO:0000304"/>
    <property type="project" value="MGI"/>
</dbReference>
<dbReference type="GO" id="GO:0060684">
    <property type="term" value="P:epithelial-mesenchymal cell signaling"/>
    <property type="evidence" value="ECO:0000314"/>
    <property type="project" value="MGI"/>
</dbReference>
<dbReference type="GO" id="GO:0072080">
    <property type="term" value="P:nephron tubule development"/>
    <property type="evidence" value="ECO:0000314"/>
    <property type="project" value="MGI"/>
</dbReference>
<dbReference type="GO" id="GO:0072079">
    <property type="term" value="P:nephron tubule formation"/>
    <property type="evidence" value="ECO:0000314"/>
    <property type="project" value="MGI"/>
</dbReference>
<dbReference type="GO" id="GO:0042475">
    <property type="term" value="P:odontogenesis of dentin-containing tooth"/>
    <property type="evidence" value="ECO:0007669"/>
    <property type="project" value="Ensembl"/>
</dbReference>
<dbReference type="GO" id="GO:0045893">
    <property type="term" value="P:positive regulation of DNA-templated transcription"/>
    <property type="evidence" value="ECO:0000314"/>
    <property type="project" value="MGI"/>
</dbReference>
<dbReference type="GO" id="GO:0010628">
    <property type="term" value="P:positive regulation of gene expression"/>
    <property type="evidence" value="ECO:0000314"/>
    <property type="project" value="MGI"/>
</dbReference>
<dbReference type="GO" id="GO:0070172">
    <property type="term" value="P:positive regulation of tooth mineralization"/>
    <property type="evidence" value="ECO:0007669"/>
    <property type="project" value="Ensembl"/>
</dbReference>
<dbReference type="GO" id="GO:0007165">
    <property type="term" value="P:signal transduction"/>
    <property type="evidence" value="ECO:0000304"/>
    <property type="project" value="MGI"/>
</dbReference>
<dbReference type="GO" id="GO:0016055">
    <property type="term" value="P:Wnt signaling pathway"/>
    <property type="evidence" value="ECO:0000314"/>
    <property type="project" value="MGI"/>
</dbReference>
<dbReference type="CDD" id="cd19338">
    <property type="entry name" value="Wnt_Wnt6"/>
    <property type="match status" value="1"/>
</dbReference>
<dbReference type="FunFam" id="3.30.2460.20:FF:000001">
    <property type="entry name" value="Wnt homolog"/>
    <property type="match status" value="1"/>
</dbReference>
<dbReference type="Gene3D" id="3.30.2460.20">
    <property type="match status" value="1"/>
</dbReference>
<dbReference type="InterPro" id="IPR005817">
    <property type="entry name" value="Wnt"/>
</dbReference>
<dbReference type="InterPro" id="IPR009143">
    <property type="entry name" value="Wnt6"/>
</dbReference>
<dbReference type="InterPro" id="IPR043158">
    <property type="entry name" value="Wnt_C"/>
</dbReference>
<dbReference type="InterPro" id="IPR018161">
    <property type="entry name" value="Wnt_CS"/>
</dbReference>
<dbReference type="PANTHER" id="PTHR12027:SF72">
    <property type="entry name" value="PROTEIN WNT-6"/>
    <property type="match status" value="1"/>
</dbReference>
<dbReference type="PANTHER" id="PTHR12027">
    <property type="entry name" value="WNT RELATED"/>
    <property type="match status" value="1"/>
</dbReference>
<dbReference type="Pfam" id="PF00110">
    <property type="entry name" value="wnt"/>
    <property type="match status" value="1"/>
</dbReference>
<dbReference type="PRINTS" id="PR01845">
    <property type="entry name" value="WNT6PROTEIN"/>
</dbReference>
<dbReference type="PRINTS" id="PR01349">
    <property type="entry name" value="WNTPROTEIN"/>
</dbReference>
<dbReference type="SMART" id="SM00097">
    <property type="entry name" value="WNT1"/>
    <property type="match status" value="1"/>
</dbReference>
<dbReference type="PROSITE" id="PS00246">
    <property type="entry name" value="WNT1"/>
    <property type="match status" value="1"/>
</dbReference>
<keyword id="KW-0217">Developmental protein</keyword>
<keyword id="KW-1015">Disulfide bond</keyword>
<keyword id="KW-0272">Extracellular matrix</keyword>
<keyword id="KW-0325">Glycoprotein</keyword>
<keyword id="KW-0449">Lipoprotein</keyword>
<keyword id="KW-1185">Reference proteome</keyword>
<keyword id="KW-0964">Secreted</keyword>
<keyword id="KW-0732">Signal</keyword>
<keyword id="KW-0879">Wnt signaling pathway</keyword>
<organism>
    <name type="scientific">Mus musculus</name>
    <name type="common">Mouse</name>
    <dbReference type="NCBI Taxonomy" id="10090"/>
    <lineage>
        <taxon>Eukaryota</taxon>
        <taxon>Metazoa</taxon>
        <taxon>Chordata</taxon>
        <taxon>Craniata</taxon>
        <taxon>Vertebrata</taxon>
        <taxon>Euteleostomi</taxon>
        <taxon>Mammalia</taxon>
        <taxon>Eutheria</taxon>
        <taxon>Euarchontoglires</taxon>
        <taxon>Glires</taxon>
        <taxon>Rodentia</taxon>
        <taxon>Myomorpha</taxon>
        <taxon>Muroidea</taxon>
        <taxon>Muridae</taxon>
        <taxon>Murinae</taxon>
        <taxon>Mus</taxon>
        <taxon>Mus</taxon>
    </lineage>
</organism>
<reference key="1">
    <citation type="journal article" date="1990" name="Genes Dev.">
        <title>Expression of multiple novel Wnt-1/int-1-related genes during fetal and adult mouse development.</title>
        <authorList>
            <person name="Gavin B.J."/>
            <person name="McMahon J.A."/>
            <person name="McMahon A.P."/>
        </authorList>
    </citation>
    <scope>NUCLEOTIDE SEQUENCE [MRNA]</scope>
</reference>
<reference key="2">
    <citation type="journal article" date="2005" name="Science">
        <title>The transcriptional landscape of the mammalian genome.</title>
        <authorList>
            <person name="Carninci P."/>
            <person name="Kasukawa T."/>
            <person name="Katayama S."/>
            <person name="Gough J."/>
            <person name="Frith M.C."/>
            <person name="Maeda N."/>
            <person name="Oyama R."/>
            <person name="Ravasi T."/>
            <person name="Lenhard B."/>
            <person name="Wells C."/>
            <person name="Kodzius R."/>
            <person name="Shimokawa K."/>
            <person name="Bajic V.B."/>
            <person name="Brenner S.E."/>
            <person name="Batalov S."/>
            <person name="Forrest A.R."/>
            <person name="Zavolan M."/>
            <person name="Davis M.J."/>
            <person name="Wilming L.G."/>
            <person name="Aidinis V."/>
            <person name="Allen J.E."/>
            <person name="Ambesi-Impiombato A."/>
            <person name="Apweiler R."/>
            <person name="Aturaliya R.N."/>
            <person name="Bailey T.L."/>
            <person name="Bansal M."/>
            <person name="Baxter L."/>
            <person name="Beisel K.W."/>
            <person name="Bersano T."/>
            <person name="Bono H."/>
            <person name="Chalk A.M."/>
            <person name="Chiu K.P."/>
            <person name="Choudhary V."/>
            <person name="Christoffels A."/>
            <person name="Clutterbuck D.R."/>
            <person name="Crowe M.L."/>
            <person name="Dalla E."/>
            <person name="Dalrymple B.P."/>
            <person name="de Bono B."/>
            <person name="Della Gatta G."/>
            <person name="di Bernardo D."/>
            <person name="Down T."/>
            <person name="Engstrom P."/>
            <person name="Fagiolini M."/>
            <person name="Faulkner G."/>
            <person name="Fletcher C.F."/>
            <person name="Fukushima T."/>
            <person name="Furuno M."/>
            <person name="Futaki S."/>
            <person name="Gariboldi M."/>
            <person name="Georgii-Hemming P."/>
            <person name="Gingeras T.R."/>
            <person name="Gojobori T."/>
            <person name="Green R.E."/>
            <person name="Gustincich S."/>
            <person name="Harbers M."/>
            <person name="Hayashi Y."/>
            <person name="Hensch T.K."/>
            <person name="Hirokawa N."/>
            <person name="Hill D."/>
            <person name="Huminiecki L."/>
            <person name="Iacono M."/>
            <person name="Ikeo K."/>
            <person name="Iwama A."/>
            <person name="Ishikawa T."/>
            <person name="Jakt M."/>
            <person name="Kanapin A."/>
            <person name="Katoh M."/>
            <person name="Kawasawa Y."/>
            <person name="Kelso J."/>
            <person name="Kitamura H."/>
            <person name="Kitano H."/>
            <person name="Kollias G."/>
            <person name="Krishnan S.P."/>
            <person name="Kruger A."/>
            <person name="Kummerfeld S.K."/>
            <person name="Kurochkin I.V."/>
            <person name="Lareau L.F."/>
            <person name="Lazarevic D."/>
            <person name="Lipovich L."/>
            <person name="Liu J."/>
            <person name="Liuni S."/>
            <person name="McWilliam S."/>
            <person name="Madan Babu M."/>
            <person name="Madera M."/>
            <person name="Marchionni L."/>
            <person name="Matsuda H."/>
            <person name="Matsuzawa S."/>
            <person name="Miki H."/>
            <person name="Mignone F."/>
            <person name="Miyake S."/>
            <person name="Morris K."/>
            <person name="Mottagui-Tabar S."/>
            <person name="Mulder N."/>
            <person name="Nakano N."/>
            <person name="Nakauchi H."/>
            <person name="Ng P."/>
            <person name="Nilsson R."/>
            <person name="Nishiguchi S."/>
            <person name="Nishikawa S."/>
            <person name="Nori F."/>
            <person name="Ohara O."/>
            <person name="Okazaki Y."/>
            <person name="Orlando V."/>
            <person name="Pang K.C."/>
            <person name="Pavan W.J."/>
            <person name="Pavesi G."/>
            <person name="Pesole G."/>
            <person name="Petrovsky N."/>
            <person name="Piazza S."/>
            <person name="Reed J."/>
            <person name="Reid J.F."/>
            <person name="Ring B.Z."/>
            <person name="Ringwald M."/>
            <person name="Rost B."/>
            <person name="Ruan Y."/>
            <person name="Salzberg S.L."/>
            <person name="Sandelin A."/>
            <person name="Schneider C."/>
            <person name="Schoenbach C."/>
            <person name="Sekiguchi K."/>
            <person name="Semple C.A."/>
            <person name="Seno S."/>
            <person name="Sessa L."/>
            <person name="Sheng Y."/>
            <person name="Shibata Y."/>
            <person name="Shimada H."/>
            <person name="Shimada K."/>
            <person name="Silva D."/>
            <person name="Sinclair B."/>
            <person name="Sperling S."/>
            <person name="Stupka E."/>
            <person name="Sugiura K."/>
            <person name="Sultana R."/>
            <person name="Takenaka Y."/>
            <person name="Taki K."/>
            <person name="Tammoja K."/>
            <person name="Tan S.L."/>
            <person name="Tang S."/>
            <person name="Taylor M.S."/>
            <person name="Tegner J."/>
            <person name="Teichmann S.A."/>
            <person name="Ueda H.R."/>
            <person name="van Nimwegen E."/>
            <person name="Verardo R."/>
            <person name="Wei C.L."/>
            <person name="Yagi K."/>
            <person name="Yamanishi H."/>
            <person name="Zabarovsky E."/>
            <person name="Zhu S."/>
            <person name="Zimmer A."/>
            <person name="Hide W."/>
            <person name="Bult C."/>
            <person name="Grimmond S.M."/>
            <person name="Teasdale R.D."/>
            <person name="Liu E.T."/>
            <person name="Brusic V."/>
            <person name="Quackenbush J."/>
            <person name="Wahlestedt C."/>
            <person name="Mattick J.S."/>
            <person name="Hume D.A."/>
            <person name="Kai C."/>
            <person name="Sasaki D."/>
            <person name="Tomaru Y."/>
            <person name="Fukuda S."/>
            <person name="Kanamori-Katayama M."/>
            <person name="Suzuki M."/>
            <person name="Aoki J."/>
            <person name="Arakawa T."/>
            <person name="Iida J."/>
            <person name="Imamura K."/>
            <person name="Itoh M."/>
            <person name="Kato T."/>
            <person name="Kawaji H."/>
            <person name="Kawagashira N."/>
            <person name="Kawashima T."/>
            <person name="Kojima M."/>
            <person name="Kondo S."/>
            <person name="Konno H."/>
            <person name="Nakano K."/>
            <person name="Ninomiya N."/>
            <person name="Nishio T."/>
            <person name="Okada M."/>
            <person name="Plessy C."/>
            <person name="Shibata K."/>
            <person name="Shiraki T."/>
            <person name="Suzuki S."/>
            <person name="Tagami M."/>
            <person name="Waki K."/>
            <person name="Watahiki A."/>
            <person name="Okamura-Oho Y."/>
            <person name="Suzuki H."/>
            <person name="Kawai J."/>
            <person name="Hayashizaki Y."/>
        </authorList>
    </citation>
    <scope>NUCLEOTIDE SEQUENCE [LARGE SCALE MRNA]</scope>
    <source>
        <strain>C57BL/6J</strain>
    </source>
</reference>
<reference key="3">
    <citation type="submission" date="2005-07" db="EMBL/GenBank/DDBJ databases">
        <authorList>
            <person name="Mural R.J."/>
            <person name="Adams M.D."/>
            <person name="Myers E.W."/>
            <person name="Smith H.O."/>
            <person name="Venter J.C."/>
        </authorList>
    </citation>
    <scope>NUCLEOTIDE SEQUENCE [LARGE SCALE GENOMIC DNA]</scope>
</reference>
<reference key="4">
    <citation type="journal article" date="2004" name="Genome Res.">
        <title>The status, quality, and expansion of the NIH full-length cDNA project: the Mammalian Gene Collection (MGC).</title>
        <authorList>
            <consortium name="The MGC Project Team"/>
        </authorList>
    </citation>
    <scope>NUCLEOTIDE SEQUENCE [LARGE SCALE MRNA]</scope>
    <source>
        <tissue>Limb</tissue>
    </source>
</reference>
<reference key="5">
    <citation type="journal article" date="2000" name="Eur. J. Biochem.">
        <title>The evolutionarily conserved porcupine gene family is involved in the processing of the Wnt family.</title>
        <authorList>
            <person name="Tanaka K."/>
            <person name="Okabayashi H."/>
            <person name="Asashima M."/>
            <person name="Perrimon N."/>
            <person name="Kadowaki T."/>
        </authorList>
    </citation>
    <scope>INTERACTION WITH PORCN</scope>
</reference>
<reference key="6">
    <citation type="journal article" date="2013" name="Oncogene">
        <title>WNT6 is a novel target gene of caveolin-1 promoting chemoresistance to epirubicin in human gastric cancer cells.</title>
        <authorList>
            <person name="Yuan G."/>
            <person name="Regel I."/>
            <person name="Lian F."/>
            <person name="Friedrich T."/>
            <person name="Hitkova I."/>
            <person name="Hofheinz R.D."/>
            <person name="Stroebel P."/>
            <person name="Langer R."/>
            <person name="Keller G."/>
            <person name="Roecken C."/>
            <person name="Zimmermann W."/>
            <person name="Schmid R.M."/>
            <person name="Ebert M.P.A."/>
            <person name="Burgermeister E."/>
        </authorList>
    </citation>
    <scope>TISSUE SPECIFICITY</scope>
</reference>
<gene>
    <name type="primary">Wnt6</name>
    <name type="synonym">Wnt-6</name>
</gene>
<proteinExistence type="evidence at protein level"/>
<name>WNT6_MOUSE</name>
<accession>P22727</accession>
<accession>Q80ZM9</accession>
<evidence type="ECO:0000250" key="1">
    <source>
        <dbReference type="UniProtKB" id="P27467"/>
    </source>
</evidence>
<evidence type="ECO:0000250" key="2">
    <source>
        <dbReference type="UniProtKB" id="P28026"/>
    </source>
</evidence>
<evidence type="ECO:0000250" key="3">
    <source>
        <dbReference type="UniProtKB" id="P56704"/>
    </source>
</evidence>
<evidence type="ECO:0000255" key="4"/>
<evidence type="ECO:0000256" key="5">
    <source>
        <dbReference type="SAM" id="MobiDB-lite"/>
    </source>
</evidence>
<evidence type="ECO:0000269" key="6">
    <source>
    </source>
</evidence>
<evidence type="ECO:0000269" key="7">
    <source>
    </source>
</evidence>
<evidence type="ECO:0000305" key="8"/>
<comment type="function">
    <text>Ligand for members of the frizzled family of seven transmembrane receptors. Probable developmental protein. May be a signaling molecule which affects the development of discrete regions of tissues. Is likely to signal over only few cell diameters.</text>
</comment>
<comment type="subunit">
    <text evidence="6">Interacts with PORCN.</text>
</comment>
<comment type="subcellular location">
    <subcellularLocation>
        <location>Secreted</location>
        <location>Extracellular space</location>
        <location>Extracellular matrix</location>
    </subcellularLocation>
</comment>
<comment type="tissue specificity">
    <text evidence="7">Detected in ileum, colon and stomach (at protein level).</text>
</comment>
<comment type="PTM">
    <text evidence="1 3">Palmitoleoylation is required for efficient binding to frizzled receptors. Depalmitoleoylation leads to Wnt signaling pathway inhibition.</text>
</comment>
<comment type="similarity">
    <text evidence="8">Belongs to the Wnt family.</text>
</comment>